<protein>
    <recommendedName>
        <fullName evidence="1">UDP-N-acetylglucosamine--N-acetylmuramyl-(pentapeptide) pyrophosphoryl-undecaprenol N-acetylglucosamine transferase</fullName>
        <ecNumber evidence="1">2.4.1.227</ecNumber>
    </recommendedName>
    <alternativeName>
        <fullName evidence="1">Undecaprenyl-PP-MurNAc-pentapeptide-UDPGlcNAc GlcNAc transferase</fullName>
    </alternativeName>
</protein>
<proteinExistence type="inferred from homology"/>
<gene>
    <name evidence="1" type="primary">murG</name>
    <name type="ordered locus">CV_4343</name>
</gene>
<dbReference type="EC" id="2.4.1.227" evidence="1"/>
<dbReference type="EMBL" id="AE016825">
    <property type="protein sequence ID" value="AAQ62002.1"/>
    <property type="molecule type" value="Genomic_DNA"/>
</dbReference>
<dbReference type="RefSeq" id="WP_011137889.1">
    <property type="nucleotide sequence ID" value="NC_005085.1"/>
</dbReference>
<dbReference type="SMR" id="Q7NPZ9"/>
<dbReference type="STRING" id="243365.CV_4343"/>
<dbReference type="CAZy" id="GT28">
    <property type="family name" value="Glycosyltransferase Family 28"/>
</dbReference>
<dbReference type="GeneID" id="66366174"/>
<dbReference type="KEGG" id="cvi:CV_4343"/>
<dbReference type="eggNOG" id="COG0707">
    <property type="taxonomic scope" value="Bacteria"/>
</dbReference>
<dbReference type="HOGENOM" id="CLU_037404_2_0_4"/>
<dbReference type="OrthoDB" id="9808936at2"/>
<dbReference type="UniPathway" id="UPA00219"/>
<dbReference type="Proteomes" id="UP000001424">
    <property type="component" value="Chromosome"/>
</dbReference>
<dbReference type="GO" id="GO:0005886">
    <property type="term" value="C:plasma membrane"/>
    <property type="evidence" value="ECO:0007669"/>
    <property type="project" value="UniProtKB-SubCell"/>
</dbReference>
<dbReference type="GO" id="GO:0051991">
    <property type="term" value="F:UDP-N-acetyl-D-glucosamine:N-acetylmuramoyl-L-alanyl-D-glutamyl-meso-2,6-diaminopimelyl-D-alanyl-D-alanine-diphosphoundecaprenol 4-beta-N-acetylglucosaminlytransferase activity"/>
    <property type="evidence" value="ECO:0007669"/>
    <property type="project" value="RHEA"/>
</dbReference>
<dbReference type="GO" id="GO:0050511">
    <property type="term" value="F:undecaprenyldiphospho-muramoylpentapeptide beta-N-acetylglucosaminyltransferase activity"/>
    <property type="evidence" value="ECO:0007669"/>
    <property type="project" value="UniProtKB-UniRule"/>
</dbReference>
<dbReference type="GO" id="GO:0005975">
    <property type="term" value="P:carbohydrate metabolic process"/>
    <property type="evidence" value="ECO:0007669"/>
    <property type="project" value="InterPro"/>
</dbReference>
<dbReference type="GO" id="GO:0051301">
    <property type="term" value="P:cell division"/>
    <property type="evidence" value="ECO:0007669"/>
    <property type="project" value="UniProtKB-KW"/>
</dbReference>
<dbReference type="GO" id="GO:0071555">
    <property type="term" value="P:cell wall organization"/>
    <property type="evidence" value="ECO:0007669"/>
    <property type="project" value="UniProtKB-KW"/>
</dbReference>
<dbReference type="GO" id="GO:0030259">
    <property type="term" value="P:lipid glycosylation"/>
    <property type="evidence" value="ECO:0007669"/>
    <property type="project" value="UniProtKB-UniRule"/>
</dbReference>
<dbReference type="GO" id="GO:0009252">
    <property type="term" value="P:peptidoglycan biosynthetic process"/>
    <property type="evidence" value="ECO:0007669"/>
    <property type="project" value="UniProtKB-UniRule"/>
</dbReference>
<dbReference type="GO" id="GO:0008360">
    <property type="term" value="P:regulation of cell shape"/>
    <property type="evidence" value="ECO:0007669"/>
    <property type="project" value="UniProtKB-KW"/>
</dbReference>
<dbReference type="CDD" id="cd03785">
    <property type="entry name" value="GT28_MurG"/>
    <property type="match status" value="1"/>
</dbReference>
<dbReference type="Gene3D" id="3.40.50.2000">
    <property type="entry name" value="Glycogen Phosphorylase B"/>
    <property type="match status" value="2"/>
</dbReference>
<dbReference type="HAMAP" id="MF_00033">
    <property type="entry name" value="MurG"/>
    <property type="match status" value="1"/>
</dbReference>
<dbReference type="InterPro" id="IPR006009">
    <property type="entry name" value="GlcNAc_MurG"/>
</dbReference>
<dbReference type="InterPro" id="IPR007235">
    <property type="entry name" value="Glyco_trans_28_C"/>
</dbReference>
<dbReference type="InterPro" id="IPR004276">
    <property type="entry name" value="GlycoTrans_28_N"/>
</dbReference>
<dbReference type="NCBIfam" id="TIGR01133">
    <property type="entry name" value="murG"/>
    <property type="match status" value="1"/>
</dbReference>
<dbReference type="PANTHER" id="PTHR21015:SF22">
    <property type="entry name" value="GLYCOSYLTRANSFERASE"/>
    <property type="match status" value="1"/>
</dbReference>
<dbReference type="PANTHER" id="PTHR21015">
    <property type="entry name" value="UDP-N-ACETYLGLUCOSAMINE--N-ACETYLMURAMYL-(PENTAPEPTIDE) PYROPHOSPHORYL-UNDECAPRENOL N-ACETYLGLUCOSAMINE TRANSFERASE 1"/>
    <property type="match status" value="1"/>
</dbReference>
<dbReference type="Pfam" id="PF04101">
    <property type="entry name" value="Glyco_tran_28_C"/>
    <property type="match status" value="1"/>
</dbReference>
<dbReference type="Pfam" id="PF03033">
    <property type="entry name" value="Glyco_transf_28"/>
    <property type="match status" value="1"/>
</dbReference>
<dbReference type="SUPFAM" id="SSF53756">
    <property type="entry name" value="UDP-Glycosyltransferase/glycogen phosphorylase"/>
    <property type="match status" value="1"/>
</dbReference>
<comment type="function">
    <text evidence="1">Cell wall formation. Catalyzes the transfer of a GlcNAc subunit on undecaprenyl-pyrophosphoryl-MurNAc-pentapeptide (lipid intermediate I) to form undecaprenyl-pyrophosphoryl-MurNAc-(pentapeptide)GlcNAc (lipid intermediate II).</text>
</comment>
<comment type="catalytic activity">
    <reaction evidence="1">
        <text>di-trans,octa-cis-undecaprenyl diphospho-N-acetyl-alpha-D-muramoyl-L-alanyl-D-glutamyl-meso-2,6-diaminopimeloyl-D-alanyl-D-alanine + UDP-N-acetyl-alpha-D-glucosamine = di-trans,octa-cis-undecaprenyl diphospho-[N-acetyl-alpha-D-glucosaminyl-(1-&gt;4)]-N-acetyl-alpha-D-muramoyl-L-alanyl-D-glutamyl-meso-2,6-diaminopimeloyl-D-alanyl-D-alanine + UDP + H(+)</text>
        <dbReference type="Rhea" id="RHEA:31227"/>
        <dbReference type="ChEBI" id="CHEBI:15378"/>
        <dbReference type="ChEBI" id="CHEBI:57705"/>
        <dbReference type="ChEBI" id="CHEBI:58223"/>
        <dbReference type="ChEBI" id="CHEBI:61387"/>
        <dbReference type="ChEBI" id="CHEBI:61388"/>
        <dbReference type="EC" id="2.4.1.227"/>
    </reaction>
</comment>
<comment type="pathway">
    <text evidence="1">Cell wall biogenesis; peptidoglycan biosynthesis.</text>
</comment>
<comment type="subcellular location">
    <subcellularLocation>
        <location evidence="1">Cell inner membrane</location>
        <topology evidence="1">Peripheral membrane protein</topology>
        <orientation evidence="1">Cytoplasmic side</orientation>
    </subcellularLocation>
</comment>
<comment type="similarity">
    <text evidence="1">Belongs to the glycosyltransferase 28 family. MurG subfamily.</text>
</comment>
<name>MURG_CHRVO</name>
<accession>Q7NPZ9</accession>
<reference key="1">
    <citation type="journal article" date="2003" name="Proc. Natl. Acad. Sci. U.S.A.">
        <title>The complete genome sequence of Chromobacterium violaceum reveals remarkable and exploitable bacterial adaptability.</title>
        <authorList>
            <person name="Vasconcelos A.T.R."/>
            <person name="de Almeida D.F."/>
            <person name="Hungria M."/>
            <person name="Guimaraes C.T."/>
            <person name="Antonio R.V."/>
            <person name="Almeida F.C."/>
            <person name="de Almeida L.G.P."/>
            <person name="de Almeida R."/>
            <person name="Alves-Gomes J.A."/>
            <person name="Andrade E.M."/>
            <person name="Araripe J."/>
            <person name="de Araujo M.F.F."/>
            <person name="Astolfi-Filho S."/>
            <person name="Azevedo V."/>
            <person name="Baptista A.J."/>
            <person name="Bataus L.A.M."/>
            <person name="Batista J.S."/>
            <person name="Belo A."/>
            <person name="van den Berg C."/>
            <person name="Bogo M."/>
            <person name="Bonatto S."/>
            <person name="Bordignon J."/>
            <person name="Brigido M.M."/>
            <person name="Brito C.A."/>
            <person name="Brocchi M."/>
            <person name="Burity H.A."/>
            <person name="Camargo A.A."/>
            <person name="Cardoso D.D.P."/>
            <person name="Carneiro N.P."/>
            <person name="Carraro D.M."/>
            <person name="Carvalho C.M.B."/>
            <person name="Cascardo J.C.M."/>
            <person name="Cavada B.S."/>
            <person name="Chueire L.M.O."/>
            <person name="Creczynski-Pasa T.B."/>
            <person name="Cunha-Junior N.C."/>
            <person name="Fagundes N."/>
            <person name="Falcao C.L."/>
            <person name="Fantinatti F."/>
            <person name="Farias I.P."/>
            <person name="Felipe M.S.S."/>
            <person name="Ferrari L.P."/>
            <person name="Ferro J.A."/>
            <person name="Ferro M.I.T."/>
            <person name="Franco G.R."/>
            <person name="Freitas N.S.A."/>
            <person name="Furlan L.R."/>
            <person name="Gazzinelli R.T."/>
            <person name="Gomes E.A."/>
            <person name="Goncalves P.R."/>
            <person name="Grangeiro T.B."/>
            <person name="Grattapaglia D."/>
            <person name="Grisard E.C."/>
            <person name="Hanna E.S."/>
            <person name="Jardim S.N."/>
            <person name="Laurino J."/>
            <person name="Leoi L.C.T."/>
            <person name="Lima L.F.A."/>
            <person name="Loureiro M.F."/>
            <person name="Lyra M.C.C.P."/>
            <person name="Madeira H.M.F."/>
            <person name="Manfio G.P."/>
            <person name="Maranhao A.Q."/>
            <person name="Martins W.S."/>
            <person name="di Mauro S.M.Z."/>
            <person name="de Medeiros S.R.B."/>
            <person name="Meissner R.V."/>
            <person name="Moreira M.A.M."/>
            <person name="Nascimento F.F."/>
            <person name="Nicolas M.F."/>
            <person name="Oliveira J.G."/>
            <person name="Oliveira S.C."/>
            <person name="Paixao R.F.C."/>
            <person name="Parente J.A."/>
            <person name="Pedrosa F.O."/>
            <person name="Pena S.D.J."/>
            <person name="Pereira J.O."/>
            <person name="Pereira M."/>
            <person name="Pinto L.S.R.C."/>
            <person name="Pinto L.S."/>
            <person name="Porto J.I.R."/>
            <person name="Potrich D.P."/>
            <person name="Ramalho-Neto C.E."/>
            <person name="Reis A.M.M."/>
            <person name="Rigo L.U."/>
            <person name="Rondinelli E."/>
            <person name="Santos E.B.P."/>
            <person name="Santos F.R."/>
            <person name="Schneider M.P.C."/>
            <person name="Seuanez H.N."/>
            <person name="Silva A.M.R."/>
            <person name="da Silva A.L.C."/>
            <person name="Silva D.W."/>
            <person name="Silva R."/>
            <person name="Simoes I.C."/>
            <person name="Simon D."/>
            <person name="Soares C.M.A."/>
            <person name="Soares R.B.A."/>
            <person name="Souza E.M."/>
            <person name="Souza K.R.L."/>
            <person name="Souza R.C."/>
            <person name="Steffens M.B.R."/>
            <person name="Steindel M."/>
            <person name="Teixeira S.R."/>
            <person name="Urmenyi T."/>
            <person name="Vettore A."/>
            <person name="Wassem R."/>
            <person name="Zaha A."/>
            <person name="Simpson A.J.G."/>
        </authorList>
    </citation>
    <scope>NUCLEOTIDE SEQUENCE [LARGE SCALE GENOMIC DNA]</scope>
    <source>
        <strain>ATCC 12472 / DSM 30191 / JCM 1249 / CCUG 213 / NBRC 12614 / NCIMB 9131 / NCTC 9757 / MK</strain>
    </source>
</reference>
<sequence length="360" mass="37605">MANRTVMVMAAGTGGHIVPGLAVAKELQSRGWKVVWLGTRRGMENKLVPPTGIPLERLNFHGVRGKGLLGSLKGALQLAGAFFSSAAQIFRHRPDVVLGMGGYVCLPGGVMAGLLWKPLVLVNADAGLLLSNKALLPFASKLVCGFDGSAARGPKALVTGNPVRGEIERIAAPAARFAGRSGPLKVLVVGGSLGAKVLNETLPQAMARLPAEQRPQLTHQTGEANFAAVEAAYQAAGLRQQVELLPFVDDMPKRLAECDLVICRAGAITVSELCAAGVPSVLVPLVVSTTSHQRDNAEWMAQAGAAWHLPQKELNADGLAGLLAGLDRDQLLDKAERARALARSGAAGRVADLCQQLAGE</sequence>
<keyword id="KW-0131">Cell cycle</keyword>
<keyword id="KW-0132">Cell division</keyword>
<keyword id="KW-0997">Cell inner membrane</keyword>
<keyword id="KW-1003">Cell membrane</keyword>
<keyword id="KW-0133">Cell shape</keyword>
<keyword id="KW-0961">Cell wall biogenesis/degradation</keyword>
<keyword id="KW-0328">Glycosyltransferase</keyword>
<keyword id="KW-0472">Membrane</keyword>
<keyword id="KW-0573">Peptidoglycan synthesis</keyword>
<keyword id="KW-1185">Reference proteome</keyword>
<keyword id="KW-0808">Transferase</keyword>
<organism>
    <name type="scientific">Chromobacterium violaceum (strain ATCC 12472 / DSM 30191 / JCM 1249 / CCUG 213 / NBRC 12614 / NCIMB 9131 / NCTC 9757 / MK)</name>
    <dbReference type="NCBI Taxonomy" id="243365"/>
    <lineage>
        <taxon>Bacteria</taxon>
        <taxon>Pseudomonadati</taxon>
        <taxon>Pseudomonadota</taxon>
        <taxon>Betaproteobacteria</taxon>
        <taxon>Neisseriales</taxon>
        <taxon>Chromobacteriaceae</taxon>
        <taxon>Chromobacterium</taxon>
    </lineage>
</organism>
<feature type="chain" id="PRO_0000225045" description="UDP-N-acetylglucosamine--N-acetylmuramyl-(pentapeptide) pyrophosphoryl-undecaprenol N-acetylglucosamine transferase">
    <location>
        <begin position="1"/>
        <end position="360"/>
    </location>
</feature>
<feature type="binding site" evidence="1">
    <location>
        <begin position="13"/>
        <end position="15"/>
    </location>
    <ligand>
        <name>UDP-N-acetyl-alpha-D-glucosamine</name>
        <dbReference type="ChEBI" id="CHEBI:57705"/>
    </ligand>
</feature>
<feature type="binding site" evidence="1">
    <location>
        <position position="164"/>
    </location>
    <ligand>
        <name>UDP-N-acetyl-alpha-D-glucosamine</name>
        <dbReference type="ChEBI" id="CHEBI:57705"/>
    </ligand>
</feature>
<feature type="binding site" evidence="1">
    <location>
        <position position="192"/>
    </location>
    <ligand>
        <name>UDP-N-acetyl-alpha-D-glucosamine</name>
        <dbReference type="ChEBI" id="CHEBI:57705"/>
    </ligand>
</feature>
<feature type="binding site" evidence="1">
    <location>
        <position position="293"/>
    </location>
    <ligand>
        <name>UDP-N-acetyl-alpha-D-glucosamine</name>
        <dbReference type="ChEBI" id="CHEBI:57705"/>
    </ligand>
</feature>
<evidence type="ECO:0000255" key="1">
    <source>
        <dbReference type="HAMAP-Rule" id="MF_00033"/>
    </source>
</evidence>